<protein>
    <recommendedName>
        <fullName evidence="1">Large ribosomal subunit protein bL21</fullName>
    </recommendedName>
    <alternativeName>
        <fullName evidence="2">50S ribosomal protein L21</fullName>
    </alternativeName>
</protein>
<keyword id="KW-0002">3D-structure</keyword>
<keyword id="KW-0687">Ribonucleoprotein</keyword>
<keyword id="KW-0689">Ribosomal protein</keyword>
<keyword id="KW-0694">RNA-binding</keyword>
<keyword id="KW-0699">rRNA-binding</keyword>
<evidence type="ECO:0000255" key="1">
    <source>
        <dbReference type="HAMAP-Rule" id="MF_01363"/>
    </source>
</evidence>
<evidence type="ECO:0000305" key="2"/>
<organism>
    <name type="scientific">Lactococcus lactis subsp. cremoris (strain MG1363)</name>
    <dbReference type="NCBI Taxonomy" id="416870"/>
    <lineage>
        <taxon>Bacteria</taxon>
        <taxon>Bacillati</taxon>
        <taxon>Bacillota</taxon>
        <taxon>Bacilli</taxon>
        <taxon>Lactobacillales</taxon>
        <taxon>Streptococcaceae</taxon>
        <taxon>Lactococcus</taxon>
        <taxon>Lactococcus cremoris subsp. cremoris</taxon>
    </lineage>
</organism>
<feature type="chain" id="PRO_1000067846" description="Large ribosomal subunit protein bL21">
    <location>
        <begin position="1"/>
        <end position="104"/>
    </location>
</feature>
<name>RL21_LACLM</name>
<comment type="function">
    <text evidence="1">This protein binds to 23S rRNA in the presence of protein L20.</text>
</comment>
<comment type="subunit">
    <text evidence="1">Part of the 50S ribosomal subunit. Contacts protein L20.</text>
</comment>
<comment type="similarity">
    <text evidence="1">Belongs to the bacterial ribosomal protein bL21 family.</text>
</comment>
<sequence>MSNYAIIKTGGKQVKVEEGSVIYVEKLNVEAGQTVTFDEVIFVGGETTKVGAPLVEGATVVGEVEKHGKQKKVVTFQYKPKKHSHRKQGHRQPYTKVVIKSVNA</sequence>
<gene>
    <name evidence="1" type="primary">rplU</name>
    <name type="ordered locus">llmg_1493</name>
</gene>
<accession>A2RLA4</accession>
<proteinExistence type="evidence at protein level"/>
<reference key="1">
    <citation type="journal article" date="2007" name="J. Bacteriol.">
        <title>The complete genome sequence of the lactic acid bacterial paradigm Lactococcus lactis subsp. cremoris MG1363.</title>
        <authorList>
            <person name="Wegmann U."/>
            <person name="O'Connell-Motherway M."/>
            <person name="Zomer A."/>
            <person name="Buist G."/>
            <person name="Shearman C."/>
            <person name="Canchaya C."/>
            <person name="Ventura M."/>
            <person name="Goesmann A."/>
            <person name="Gasson M.J."/>
            <person name="Kuipers O.P."/>
            <person name="van Sinderen D."/>
            <person name="Kok J."/>
        </authorList>
    </citation>
    <scope>NUCLEOTIDE SEQUENCE [LARGE SCALE GENOMIC DNA]</scope>
    <source>
        <strain>MG1363</strain>
    </source>
</reference>
<dbReference type="EMBL" id="AM406671">
    <property type="protein sequence ID" value="CAL98071.1"/>
    <property type="molecule type" value="Genomic_DNA"/>
</dbReference>
<dbReference type="RefSeq" id="WP_003130644.1">
    <property type="nucleotide sequence ID" value="NZ_WJVF01000002.1"/>
</dbReference>
<dbReference type="PDB" id="5MYJ">
    <property type="method" value="EM"/>
    <property type="resolution" value="5.60 A"/>
    <property type="chains" value="BU=1-104"/>
</dbReference>
<dbReference type="PDBsum" id="5MYJ"/>
<dbReference type="EMDB" id="EMD-3581"/>
<dbReference type="SMR" id="A2RLA4"/>
<dbReference type="STRING" id="416870.llmg_1493"/>
<dbReference type="GeneID" id="89633203"/>
<dbReference type="KEGG" id="llm:llmg_1493"/>
<dbReference type="eggNOG" id="COG0261">
    <property type="taxonomic scope" value="Bacteria"/>
</dbReference>
<dbReference type="HOGENOM" id="CLU_061463_3_1_9"/>
<dbReference type="OrthoDB" id="9813334at2"/>
<dbReference type="PhylomeDB" id="A2RLA4"/>
<dbReference type="Proteomes" id="UP000000364">
    <property type="component" value="Chromosome"/>
</dbReference>
<dbReference type="GO" id="GO:0005737">
    <property type="term" value="C:cytoplasm"/>
    <property type="evidence" value="ECO:0007669"/>
    <property type="project" value="UniProtKB-ARBA"/>
</dbReference>
<dbReference type="GO" id="GO:1990904">
    <property type="term" value="C:ribonucleoprotein complex"/>
    <property type="evidence" value="ECO:0007669"/>
    <property type="project" value="UniProtKB-KW"/>
</dbReference>
<dbReference type="GO" id="GO:0005840">
    <property type="term" value="C:ribosome"/>
    <property type="evidence" value="ECO:0007669"/>
    <property type="project" value="UniProtKB-KW"/>
</dbReference>
<dbReference type="GO" id="GO:0019843">
    <property type="term" value="F:rRNA binding"/>
    <property type="evidence" value="ECO:0007669"/>
    <property type="project" value="UniProtKB-UniRule"/>
</dbReference>
<dbReference type="GO" id="GO:0003735">
    <property type="term" value="F:structural constituent of ribosome"/>
    <property type="evidence" value="ECO:0007669"/>
    <property type="project" value="InterPro"/>
</dbReference>
<dbReference type="GO" id="GO:0006412">
    <property type="term" value="P:translation"/>
    <property type="evidence" value="ECO:0007669"/>
    <property type="project" value="UniProtKB-UniRule"/>
</dbReference>
<dbReference type="HAMAP" id="MF_01363">
    <property type="entry name" value="Ribosomal_bL21"/>
    <property type="match status" value="1"/>
</dbReference>
<dbReference type="InterPro" id="IPR028909">
    <property type="entry name" value="bL21-like"/>
</dbReference>
<dbReference type="InterPro" id="IPR036164">
    <property type="entry name" value="bL21-like_sf"/>
</dbReference>
<dbReference type="InterPro" id="IPR001787">
    <property type="entry name" value="Ribosomal_bL21"/>
</dbReference>
<dbReference type="NCBIfam" id="TIGR00061">
    <property type="entry name" value="L21"/>
    <property type="match status" value="1"/>
</dbReference>
<dbReference type="PANTHER" id="PTHR21349">
    <property type="entry name" value="50S RIBOSOMAL PROTEIN L21"/>
    <property type="match status" value="1"/>
</dbReference>
<dbReference type="PANTHER" id="PTHR21349:SF0">
    <property type="entry name" value="LARGE RIBOSOMAL SUBUNIT PROTEIN BL21M"/>
    <property type="match status" value="1"/>
</dbReference>
<dbReference type="Pfam" id="PF00829">
    <property type="entry name" value="Ribosomal_L21p"/>
    <property type="match status" value="1"/>
</dbReference>
<dbReference type="SUPFAM" id="SSF141091">
    <property type="entry name" value="L21p-like"/>
    <property type="match status" value="1"/>
</dbReference>